<organism>
    <name type="scientific">Methanosarcina mazei (strain ATCC BAA-159 / DSM 3647 / Goe1 / Go1 / JCM 11833 / OCM 88)</name>
    <name type="common">Methanosarcina frisia</name>
    <dbReference type="NCBI Taxonomy" id="192952"/>
    <lineage>
        <taxon>Archaea</taxon>
        <taxon>Methanobacteriati</taxon>
        <taxon>Methanobacteriota</taxon>
        <taxon>Stenosarchaea group</taxon>
        <taxon>Methanomicrobia</taxon>
        <taxon>Methanosarcinales</taxon>
        <taxon>Methanosarcinaceae</taxon>
        <taxon>Methanosarcina</taxon>
    </lineage>
</organism>
<proteinExistence type="inferred from homology"/>
<accession>P0CW11</accession>
<accession>P42367</accession>
<evidence type="ECO:0000255" key="1">
    <source>
        <dbReference type="HAMAP-Rule" id="MF_01151"/>
    </source>
</evidence>
<evidence type="ECO:0000256" key="2">
    <source>
        <dbReference type="SAM" id="MobiDB-lite"/>
    </source>
</evidence>
<evidence type="ECO:0000305" key="3"/>
<dbReference type="EMBL" id="AE008384">
    <property type="protein sequence ID" value="AAM32202.1"/>
    <property type="status" value="ALT_INIT"/>
    <property type="molecule type" value="Genomic_DNA"/>
</dbReference>
<dbReference type="RefSeq" id="WP_048038245.1">
    <property type="nucleotide sequence ID" value="NC_003901.1"/>
</dbReference>
<dbReference type="SMR" id="P0CW11"/>
<dbReference type="GeneID" id="82161583"/>
<dbReference type="KEGG" id="mma:MM_2506"/>
<dbReference type="PATRIC" id="fig|192952.21.peg.2869"/>
<dbReference type="eggNOG" id="arCOG04772">
    <property type="taxonomic scope" value="Archaea"/>
</dbReference>
<dbReference type="HOGENOM" id="CLU_057217_5_1_2"/>
<dbReference type="Proteomes" id="UP000000595">
    <property type="component" value="Chromosome"/>
</dbReference>
<dbReference type="GO" id="GO:0005737">
    <property type="term" value="C:cytoplasm"/>
    <property type="evidence" value="ECO:0007669"/>
    <property type="project" value="UniProtKB-SubCell"/>
</dbReference>
<dbReference type="GO" id="GO:0000774">
    <property type="term" value="F:adenyl-nucleotide exchange factor activity"/>
    <property type="evidence" value="ECO:0007669"/>
    <property type="project" value="InterPro"/>
</dbReference>
<dbReference type="GO" id="GO:0042803">
    <property type="term" value="F:protein homodimerization activity"/>
    <property type="evidence" value="ECO:0007669"/>
    <property type="project" value="InterPro"/>
</dbReference>
<dbReference type="GO" id="GO:0051087">
    <property type="term" value="F:protein-folding chaperone binding"/>
    <property type="evidence" value="ECO:0007669"/>
    <property type="project" value="InterPro"/>
</dbReference>
<dbReference type="GO" id="GO:0051082">
    <property type="term" value="F:unfolded protein binding"/>
    <property type="evidence" value="ECO:0007669"/>
    <property type="project" value="TreeGrafter"/>
</dbReference>
<dbReference type="GO" id="GO:0006457">
    <property type="term" value="P:protein folding"/>
    <property type="evidence" value="ECO:0007669"/>
    <property type="project" value="InterPro"/>
</dbReference>
<dbReference type="CDD" id="cd00446">
    <property type="entry name" value="GrpE"/>
    <property type="match status" value="1"/>
</dbReference>
<dbReference type="FunFam" id="2.30.22.10:FF:000001">
    <property type="entry name" value="Protein GrpE"/>
    <property type="match status" value="1"/>
</dbReference>
<dbReference type="Gene3D" id="3.90.20.20">
    <property type="match status" value="1"/>
</dbReference>
<dbReference type="Gene3D" id="2.30.22.10">
    <property type="entry name" value="Head domain of nucleotide exchange factor GrpE"/>
    <property type="match status" value="1"/>
</dbReference>
<dbReference type="HAMAP" id="MF_01151">
    <property type="entry name" value="GrpE"/>
    <property type="match status" value="1"/>
</dbReference>
<dbReference type="InterPro" id="IPR000740">
    <property type="entry name" value="GrpE"/>
</dbReference>
<dbReference type="InterPro" id="IPR013805">
    <property type="entry name" value="GrpE_coiled_coil"/>
</dbReference>
<dbReference type="InterPro" id="IPR009012">
    <property type="entry name" value="GrpE_head"/>
</dbReference>
<dbReference type="NCBIfam" id="NF010750">
    <property type="entry name" value="PRK14153.1"/>
    <property type="match status" value="1"/>
</dbReference>
<dbReference type="PANTHER" id="PTHR21237">
    <property type="entry name" value="GRPE PROTEIN"/>
    <property type="match status" value="1"/>
</dbReference>
<dbReference type="PANTHER" id="PTHR21237:SF23">
    <property type="entry name" value="GRPE PROTEIN HOMOLOG, MITOCHONDRIAL"/>
    <property type="match status" value="1"/>
</dbReference>
<dbReference type="Pfam" id="PF01025">
    <property type="entry name" value="GrpE"/>
    <property type="match status" value="1"/>
</dbReference>
<dbReference type="PRINTS" id="PR00773">
    <property type="entry name" value="GRPEPROTEIN"/>
</dbReference>
<dbReference type="SUPFAM" id="SSF58014">
    <property type="entry name" value="Coiled-coil domain of nucleotide exchange factor GrpE"/>
    <property type="match status" value="1"/>
</dbReference>
<dbReference type="SUPFAM" id="SSF51064">
    <property type="entry name" value="Head domain of nucleotide exchange factor GrpE"/>
    <property type="match status" value="1"/>
</dbReference>
<dbReference type="PROSITE" id="PS01071">
    <property type="entry name" value="GRPE"/>
    <property type="match status" value="1"/>
</dbReference>
<name>GRPE_METMA</name>
<reference key="1">
    <citation type="journal article" date="2002" name="J. Mol. Microbiol. Biotechnol.">
        <title>The genome of Methanosarcina mazei: evidence for lateral gene transfer between Bacteria and Archaea.</title>
        <authorList>
            <person name="Deppenmeier U."/>
            <person name="Johann A."/>
            <person name="Hartsch T."/>
            <person name="Merkl R."/>
            <person name="Schmitz R.A."/>
            <person name="Martinez-Arias R."/>
            <person name="Henne A."/>
            <person name="Wiezer A."/>
            <person name="Baeumer S."/>
            <person name="Jacobi C."/>
            <person name="Brueggemann H."/>
            <person name="Lienard T."/>
            <person name="Christmann A."/>
            <person name="Boemecke M."/>
            <person name="Steckel S."/>
            <person name="Bhattacharyya A."/>
            <person name="Lykidis A."/>
            <person name="Overbeek R."/>
            <person name="Klenk H.-P."/>
            <person name="Gunsalus R.P."/>
            <person name="Fritz H.-J."/>
            <person name="Gottschalk G."/>
        </authorList>
    </citation>
    <scope>NUCLEOTIDE SEQUENCE [LARGE SCALE GENOMIC DNA]</scope>
    <source>
        <strain>ATCC BAA-159 / DSM 3647 / Goe1 / Go1 / JCM 11833 / OCM 88</strain>
    </source>
</reference>
<sequence length="209" mass="23995">MKKSRKKENMDSKERNQKEAERSEARNSESPAEKAGETKVSPENEPSSPEAEKNPEEACREENEILKDQLFRLAADFDNFRKRTARQMEENRKSVLEQVLLDFVEVTDNFDRAIKSARTAEDMGPIVSGIEQLSKQFFSILEKYGLERVKCEKAGEFDPHRHEAIHHIETSEVPDNTIVEIYKEGYALNEKVVRPALVSVARSPEEAEK</sequence>
<gene>
    <name evidence="1" type="primary">grpE</name>
    <name type="ordered locus">MM_2506</name>
</gene>
<protein>
    <recommendedName>
        <fullName evidence="1">Protein GrpE</fullName>
    </recommendedName>
    <alternativeName>
        <fullName evidence="1">HSP-70 cofactor</fullName>
    </alternativeName>
</protein>
<keyword id="KW-0143">Chaperone</keyword>
<keyword id="KW-0963">Cytoplasm</keyword>
<keyword id="KW-0346">Stress response</keyword>
<comment type="function">
    <text evidence="1">Participates actively in the response to hyperosmotic and heat shock by preventing the aggregation of stress-denatured proteins, in association with DnaK and GrpE. It is the nucleotide exchange factor for DnaK and may function as a thermosensor. Unfolded proteins bind initially to DnaJ; upon interaction with the DnaJ-bound protein, DnaK hydrolyzes its bound ATP, resulting in the formation of a stable complex. GrpE releases ADP from DnaK; ATP binding to DnaK triggers the release of the substrate protein, thus completing the reaction cycle. Several rounds of ATP-dependent interactions between DnaJ, DnaK and GrpE are required for fully efficient folding.</text>
</comment>
<comment type="subunit">
    <text evidence="1">Homodimer.</text>
</comment>
<comment type="subcellular location">
    <subcellularLocation>
        <location evidence="1">Cytoplasm</location>
    </subcellularLocation>
</comment>
<comment type="similarity">
    <text evidence="1">Belongs to the GrpE family.</text>
</comment>
<comment type="sequence caution" evidence="3">
    <conflict type="erroneous initiation">
        <sequence resource="EMBL-CDS" id="AAM32202"/>
    </conflict>
    <text>Truncated N-terminus.</text>
</comment>
<feature type="chain" id="PRO_0000408038" description="Protein GrpE">
    <location>
        <begin position="1"/>
        <end position="209"/>
    </location>
</feature>
<feature type="region of interest" description="Disordered" evidence="2">
    <location>
        <begin position="1"/>
        <end position="63"/>
    </location>
</feature>
<feature type="compositionally biased region" description="Basic and acidic residues" evidence="2">
    <location>
        <begin position="7"/>
        <end position="42"/>
    </location>
</feature>
<feature type="compositionally biased region" description="Basic and acidic residues" evidence="2">
    <location>
        <begin position="50"/>
        <end position="63"/>
    </location>
</feature>